<comment type="similarity">
    <text evidence="1">Belongs to the universal ribosomal protein uS2 family.</text>
</comment>
<gene>
    <name evidence="1" type="primary">rpsB</name>
    <name type="ordered locus">SAG1832</name>
</gene>
<dbReference type="EMBL" id="AE009948">
    <property type="protein sequence ID" value="AAN00695.1"/>
    <property type="molecule type" value="Genomic_DNA"/>
</dbReference>
<dbReference type="RefSeq" id="NP_688822.1">
    <property type="nucleotide sequence ID" value="NC_004116.1"/>
</dbReference>
<dbReference type="RefSeq" id="WP_000268454.1">
    <property type="nucleotide sequence ID" value="NC_004116.1"/>
</dbReference>
<dbReference type="SMR" id="Q8DXL8"/>
<dbReference type="STRING" id="208435.SAG1832"/>
<dbReference type="GeneID" id="66886669"/>
<dbReference type="KEGG" id="sag:SAG1832"/>
<dbReference type="PATRIC" id="fig|208435.3.peg.1840"/>
<dbReference type="HOGENOM" id="CLU_040318_1_2_9"/>
<dbReference type="OrthoDB" id="9808036at2"/>
<dbReference type="Proteomes" id="UP000000821">
    <property type="component" value="Chromosome"/>
</dbReference>
<dbReference type="GO" id="GO:0022627">
    <property type="term" value="C:cytosolic small ribosomal subunit"/>
    <property type="evidence" value="ECO:0007669"/>
    <property type="project" value="TreeGrafter"/>
</dbReference>
<dbReference type="GO" id="GO:0003735">
    <property type="term" value="F:structural constituent of ribosome"/>
    <property type="evidence" value="ECO:0007669"/>
    <property type="project" value="InterPro"/>
</dbReference>
<dbReference type="GO" id="GO:0006412">
    <property type="term" value="P:translation"/>
    <property type="evidence" value="ECO:0007669"/>
    <property type="project" value="UniProtKB-UniRule"/>
</dbReference>
<dbReference type="CDD" id="cd01425">
    <property type="entry name" value="RPS2"/>
    <property type="match status" value="1"/>
</dbReference>
<dbReference type="FunFam" id="1.10.287.610:FF:000001">
    <property type="entry name" value="30S ribosomal protein S2"/>
    <property type="match status" value="1"/>
</dbReference>
<dbReference type="Gene3D" id="3.40.50.10490">
    <property type="entry name" value="Glucose-6-phosphate isomerase like protein, domain 1"/>
    <property type="match status" value="1"/>
</dbReference>
<dbReference type="Gene3D" id="1.10.287.610">
    <property type="entry name" value="Helix hairpin bin"/>
    <property type="match status" value="1"/>
</dbReference>
<dbReference type="HAMAP" id="MF_00291_B">
    <property type="entry name" value="Ribosomal_uS2_B"/>
    <property type="match status" value="1"/>
</dbReference>
<dbReference type="InterPro" id="IPR001865">
    <property type="entry name" value="Ribosomal_uS2"/>
</dbReference>
<dbReference type="InterPro" id="IPR005706">
    <property type="entry name" value="Ribosomal_uS2_bac/mit/plastid"/>
</dbReference>
<dbReference type="InterPro" id="IPR018130">
    <property type="entry name" value="Ribosomal_uS2_CS"/>
</dbReference>
<dbReference type="InterPro" id="IPR023591">
    <property type="entry name" value="Ribosomal_uS2_flav_dom_sf"/>
</dbReference>
<dbReference type="NCBIfam" id="TIGR01011">
    <property type="entry name" value="rpsB_bact"/>
    <property type="match status" value="1"/>
</dbReference>
<dbReference type="PANTHER" id="PTHR12534">
    <property type="entry name" value="30S RIBOSOMAL PROTEIN S2 PROKARYOTIC AND ORGANELLAR"/>
    <property type="match status" value="1"/>
</dbReference>
<dbReference type="PANTHER" id="PTHR12534:SF0">
    <property type="entry name" value="SMALL RIBOSOMAL SUBUNIT PROTEIN US2M"/>
    <property type="match status" value="1"/>
</dbReference>
<dbReference type="Pfam" id="PF00318">
    <property type="entry name" value="Ribosomal_S2"/>
    <property type="match status" value="1"/>
</dbReference>
<dbReference type="PRINTS" id="PR00395">
    <property type="entry name" value="RIBOSOMALS2"/>
</dbReference>
<dbReference type="SUPFAM" id="SSF52313">
    <property type="entry name" value="Ribosomal protein S2"/>
    <property type="match status" value="1"/>
</dbReference>
<dbReference type="PROSITE" id="PS00962">
    <property type="entry name" value="RIBOSOMAL_S2_1"/>
    <property type="match status" value="1"/>
</dbReference>
<sequence length="256" mass="28615">MAVISMKQLLEAGVHFGHQTRRWNPKMAKYIFTERNGIHVIDLQQTVKLADQAYEFVRDAAANDAVILFVGTKKQAAEAVAEEAKRAGQYFINHRWLGGTLTNWGTIQKRIARLKEIKRMEEEGTFELLPKKEVALLNKQRARLEKFLGGIEDMPRIPDVMYVVDPHKEQIAVKEAKKLGIPVVAMVDTNADPDDIDVIIPANDDAIRAVKLITSKLADAVIEGRQGEDADVDFAQEAQADSIEEIVEVVEGSNND</sequence>
<proteinExistence type="inferred from homology"/>
<reference key="1">
    <citation type="journal article" date="2002" name="Proc. Natl. Acad. Sci. U.S.A.">
        <title>Complete genome sequence and comparative genomic analysis of an emerging human pathogen, serotype V Streptococcus agalactiae.</title>
        <authorList>
            <person name="Tettelin H."/>
            <person name="Masignani V."/>
            <person name="Cieslewicz M.J."/>
            <person name="Eisen J.A."/>
            <person name="Peterson S.N."/>
            <person name="Wessels M.R."/>
            <person name="Paulsen I.T."/>
            <person name="Nelson K.E."/>
            <person name="Margarit I."/>
            <person name="Read T.D."/>
            <person name="Madoff L.C."/>
            <person name="Wolf A.M."/>
            <person name="Beanan M.J."/>
            <person name="Brinkac L.M."/>
            <person name="Daugherty S.C."/>
            <person name="DeBoy R.T."/>
            <person name="Durkin A.S."/>
            <person name="Kolonay J.F."/>
            <person name="Madupu R."/>
            <person name="Lewis M.R."/>
            <person name="Radune D."/>
            <person name="Fedorova N.B."/>
            <person name="Scanlan D."/>
            <person name="Khouri H.M."/>
            <person name="Mulligan S."/>
            <person name="Carty H.A."/>
            <person name="Cline R.T."/>
            <person name="Van Aken S.E."/>
            <person name="Gill J."/>
            <person name="Scarselli M."/>
            <person name="Mora M."/>
            <person name="Iacobini E.T."/>
            <person name="Brettoni C."/>
            <person name="Galli G."/>
            <person name="Mariani M."/>
            <person name="Vegni F."/>
            <person name="Maione D."/>
            <person name="Rinaudo D."/>
            <person name="Rappuoli R."/>
            <person name="Telford J.L."/>
            <person name="Kasper D.L."/>
            <person name="Grandi G."/>
            <person name="Fraser C.M."/>
        </authorList>
    </citation>
    <scope>NUCLEOTIDE SEQUENCE [LARGE SCALE GENOMIC DNA]</scope>
    <source>
        <strain>ATCC BAA-611 / 2603 V/R</strain>
    </source>
</reference>
<accession>Q8DXL8</accession>
<protein>
    <recommendedName>
        <fullName evidence="1">Small ribosomal subunit protein uS2</fullName>
    </recommendedName>
    <alternativeName>
        <fullName evidence="2">30S ribosomal protein S2</fullName>
    </alternativeName>
</protein>
<organism>
    <name type="scientific">Streptococcus agalactiae serotype V (strain ATCC BAA-611 / 2603 V/R)</name>
    <dbReference type="NCBI Taxonomy" id="208435"/>
    <lineage>
        <taxon>Bacteria</taxon>
        <taxon>Bacillati</taxon>
        <taxon>Bacillota</taxon>
        <taxon>Bacilli</taxon>
        <taxon>Lactobacillales</taxon>
        <taxon>Streptococcaceae</taxon>
        <taxon>Streptococcus</taxon>
    </lineage>
</organism>
<evidence type="ECO:0000255" key="1">
    <source>
        <dbReference type="HAMAP-Rule" id="MF_00291"/>
    </source>
</evidence>
<evidence type="ECO:0000305" key="2"/>
<feature type="chain" id="PRO_0000134247" description="Small ribosomal subunit protein uS2">
    <location>
        <begin position="1"/>
        <end position="256"/>
    </location>
</feature>
<keyword id="KW-1185">Reference proteome</keyword>
<keyword id="KW-0687">Ribonucleoprotein</keyword>
<keyword id="KW-0689">Ribosomal protein</keyword>
<name>RS2_STRA5</name>